<dbReference type="EMBL" id="AF302685">
    <property type="protein sequence ID" value="AAG53657.1"/>
    <property type="molecule type" value="mRNA"/>
</dbReference>
<dbReference type="EMBL" id="AB042807">
    <property type="protein sequence ID" value="BAB60723.1"/>
    <property type="molecule type" value="mRNA"/>
</dbReference>
<dbReference type="CCDS" id="CCDS15350.1"/>
<dbReference type="RefSeq" id="NP_075019.1">
    <property type="nucleotide sequence ID" value="NM_022881.6"/>
</dbReference>
<dbReference type="SMR" id="Q99PG4"/>
<dbReference type="BioGRID" id="211040">
    <property type="interactions" value="3"/>
</dbReference>
<dbReference type="FunCoup" id="Q99PG4">
    <property type="interactions" value="477"/>
</dbReference>
<dbReference type="STRING" id="10090.ENSMUSP00000027603"/>
<dbReference type="iPTMnet" id="Q99PG4"/>
<dbReference type="PhosphoSitePlus" id="Q99PG4"/>
<dbReference type="jPOST" id="Q99PG4"/>
<dbReference type="PaxDb" id="10090-ENSMUSP00000027603"/>
<dbReference type="ProteomicsDB" id="253122"/>
<dbReference type="Antibodypedia" id="20616">
    <property type="antibodies" value="184 antibodies from 29 providers"/>
</dbReference>
<dbReference type="DNASU" id="64214"/>
<dbReference type="Ensembl" id="ENSMUST00000027603.4">
    <property type="protein sequence ID" value="ENSMUSP00000027603.4"/>
    <property type="gene ID" value="ENSMUSG00000026357.4"/>
</dbReference>
<dbReference type="GeneID" id="64214"/>
<dbReference type="KEGG" id="mmu:64214"/>
<dbReference type="UCSC" id="uc007cxl.1">
    <property type="organism name" value="mouse"/>
</dbReference>
<dbReference type="AGR" id="MGI:1927498"/>
<dbReference type="CTD" id="64407"/>
<dbReference type="MGI" id="MGI:1927498">
    <property type="gene designation" value="Rgs18"/>
</dbReference>
<dbReference type="VEuPathDB" id="HostDB:ENSMUSG00000026357"/>
<dbReference type="eggNOG" id="KOG3589">
    <property type="taxonomic scope" value="Eukaryota"/>
</dbReference>
<dbReference type="GeneTree" id="ENSGT00940000161034"/>
<dbReference type="HOGENOM" id="CLU_059863_3_2_1"/>
<dbReference type="InParanoid" id="Q99PG4"/>
<dbReference type="OMA" id="TFFKLMH"/>
<dbReference type="OrthoDB" id="196547at2759"/>
<dbReference type="PhylomeDB" id="Q99PG4"/>
<dbReference type="TreeFam" id="TF315837"/>
<dbReference type="Reactome" id="R-MMU-416476">
    <property type="pathway name" value="G alpha (q) signalling events"/>
</dbReference>
<dbReference type="Reactome" id="R-MMU-418594">
    <property type="pathway name" value="G alpha (i) signalling events"/>
</dbReference>
<dbReference type="BioGRID-ORCS" id="64214">
    <property type="hits" value="0 hits in 78 CRISPR screens"/>
</dbReference>
<dbReference type="ChiTaRS" id="Rgs18">
    <property type="organism name" value="mouse"/>
</dbReference>
<dbReference type="PRO" id="PR:Q99PG4"/>
<dbReference type="Proteomes" id="UP000000589">
    <property type="component" value="Chromosome 1"/>
</dbReference>
<dbReference type="RNAct" id="Q99PG4">
    <property type="molecule type" value="protein"/>
</dbReference>
<dbReference type="Bgee" id="ENSMUSG00000026357">
    <property type="expression patterns" value="Expressed in granulocyte and 91 other cell types or tissues"/>
</dbReference>
<dbReference type="ExpressionAtlas" id="Q99PG4">
    <property type="expression patterns" value="baseline and differential"/>
</dbReference>
<dbReference type="GO" id="GO:0005737">
    <property type="term" value="C:cytoplasm"/>
    <property type="evidence" value="ECO:0000314"/>
    <property type="project" value="MGI"/>
</dbReference>
<dbReference type="GO" id="GO:0005096">
    <property type="term" value="F:GTPase activator activity"/>
    <property type="evidence" value="ECO:0000314"/>
    <property type="project" value="MGI"/>
</dbReference>
<dbReference type="GO" id="GO:0007186">
    <property type="term" value="P:G protein-coupled receptor signaling pathway"/>
    <property type="evidence" value="ECO:0000353"/>
    <property type="project" value="MGI"/>
</dbReference>
<dbReference type="GO" id="GO:0009968">
    <property type="term" value="P:negative regulation of signal transduction"/>
    <property type="evidence" value="ECO:0007669"/>
    <property type="project" value="UniProtKB-KW"/>
</dbReference>
<dbReference type="GO" id="GO:0008277">
    <property type="term" value="P:regulation of G protein-coupled receptor signaling pathway"/>
    <property type="evidence" value="ECO:0000314"/>
    <property type="project" value="MGI"/>
</dbReference>
<dbReference type="FunFam" id="1.10.167.10:FF:000001">
    <property type="entry name" value="Putative regulator of g-protein signaling 12"/>
    <property type="match status" value="1"/>
</dbReference>
<dbReference type="FunFam" id="1.10.196.10:FF:000001">
    <property type="entry name" value="Regulator of G-protein signaling 8"/>
    <property type="match status" value="1"/>
</dbReference>
<dbReference type="Gene3D" id="1.10.196.10">
    <property type="match status" value="1"/>
</dbReference>
<dbReference type="Gene3D" id="1.10.167.10">
    <property type="entry name" value="Regulator of G-protein Signalling 4, domain 2"/>
    <property type="match status" value="1"/>
</dbReference>
<dbReference type="InterPro" id="IPR016137">
    <property type="entry name" value="RGS"/>
</dbReference>
<dbReference type="InterPro" id="IPR036305">
    <property type="entry name" value="RGS_sf"/>
</dbReference>
<dbReference type="InterPro" id="IPR024066">
    <property type="entry name" value="RGS_subdom1/3"/>
</dbReference>
<dbReference type="InterPro" id="IPR044926">
    <property type="entry name" value="RGS_subdomain_2"/>
</dbReference>
<dbReference type="PANTHER" id="PTHR10845">
    <property type="entry name" value="REGULATOR OF G PROTEIN SIGNALING"/>
    <property type="match status" value="1"/>
</dbReference>
<dbReference type="PANTHER" id="PTHR10845:SF155">
    <property type="entry name" value="REGULATOR OF G-PROTEIN SIGNALING 18"/>
    <property type="match status" value="1"/>
</dbReference>
<dbReference type="Pfam" id="PF00615">
    <property type="entry name" value="RGS"/>
    <property type="match status" value="1"/>
</dbReference>
<dbReference type="PRINTS" id="PR01301">
    <property type="entry name" value="RGSPROTEIN"/>
</dbReference>
<dbReference type="SMART" id="SM00315">
    <property type="entry name" value="RGS"/>
    <property type="match status" value="1"/>
</dbReference>
<dbReference type="SUPFAM" id="SSF48097">
    <property type="entry name" value="Regulator of G-protein signaling, RGS"/>
    <property type="match status" value="1"/>
</dbReference>
<dbReference type="PROSITE" id="PS50132">
    <property type="entry name" value="RGS"/>
    <property type="match status" value="1"/>
</dbReference>
<organism>
    <name type="scientific">Mus musculus</name>
    <name type="common">Mouse</name>
    <dbReference type="NCBI Taxonomy" id="10090"/>
    <lineage>
        <taxon>Eukaryota</taxon>
        <taxon>Metazoa</taxon>
        <taxon>Chordata</taxon>
        <taxon>Craniata</taxon>
        <taxon>Vertebrata</taxon>
        <taxon>Euteleostomi</taxon>
        <taxon>Mammalia</taxon>
        <taxon>Eutheria</taxon>
        <taxon>Euarchontoglires</taxon>
        <taxon>Glires</taxon>
        <taxon>Rodentia</taxon>
        <taxon>Myomorpha</taxon>
        <taxon>Muroidea</taxon>
        <taxon>Muridae</taxon>
        <taxon>Murinae</taxon>
        <taxon>Mus</taxon>
        <taxon>Mus</taxon>
    </lineage>
</organism>
<evidence type="ECO:0000250" key="1">
    <source>
        <dbReference type="UniProtKB" id="Q9NS28"/>
    </source>
</evidence>
<evidence type="ECO:0000255" key="2">
    <source>
        <dbReference type="PROSITE-ProRule" id="PRU00171"/>
    </source>
</evidence>
<evidence type="ECO:0007744" key="3">
    <source>
    </source>
</evidence>
<keyword id="KW-0963">Cytoplasm</keyword>
<keyword id="KW-0597">Phosphoprotein</keyword>
<keyword id="KW-1185">Reference proteome</keyword>
<keyword id="KW-0734">Signal transduction inhibitor</keyword>
<protein>
    <recommendedName>
        <fullName>Regulator of G-protein signaling 18</fullName>
        <shortName>RGS18</shortName>
    </recommendedName>
</protein>
<reference key="1">
    <citation type="journal article" date="2001" name="J. Biol. Chem.">
        <title>Molecular cloning and characterization of a novel regulator of G-protein signaling from mouse hematopoietic stem cells.</title>
        <authorList>
            <person name="Park I.K."/>
            <person name="Klug C.A."/>
            <person name="Li K."/>
            <person name="Jerabek L."/>
            <person name="Li L."/>
            <person name="Nanamori M."/>
            <person name="Neubig R.R."/>
            <person name="Hood L."/>
            <person name="Weissman I.L."/>
            <person name="Clarke M.F."/>
        </authorList>
    </citation>
    <scope>NUCLEOTIDE SEQUENCE [MRNA]</scope>
    <source>
        <strain>BA</strain>
    </source>
</reference>
<reference key="2">
    <citation type="journal article" date="2001" name="Blood">
        <title>A novel regulator of G-protein signaling bearing GAP activity for Galphai and Galphaq in megakaryocytes.</title>
        <authorList>
            <person name="Nagata Y."/>
            <person name="Oda M."/>
            <person name="Nakata H."/>
            <person name="Shozaki Y."/>
            <person name="Kozasa T."/>
            <person name="Todokoro K."/>
        </authorList>
    </citation>
    <scope>NUCLEOTIDE SEQUENCE [MRNA]</scope>
    <source>
        <strain>BDF1</strain>
    </source>
</reference>
<reference key="3">
    <citation type="journal article" date="2010" name="Cell">
        <title>A tissue-specific atlas of mouse protein phosphorylation and expression.</title>
        <authorList>
            <person name="Huttlin E.L."/>
            <person name="Jedrychowski M.P."/>
            <person name="Elias J.E."/>
            <person name="Goswami T."/>
            <person name="Rad R."/>
            <person name="Beausoleil S.A."/>
            <person name="Villen J."/>
            <person name="Haas W."/>
            <person name="Sowa M.E."/>
            <person name="Gygi S.P."/>
        </authorList>
    </citation>
    <scope>PHOSPHORYLATION [LARGE SCALE ANALYSIS] AT SER-216 AND SER-218</scope>
    <scope>IDENTIFICATION BY MASS SPECTROMETRY [LARGE SCALE ANALYSIS]</scope>
    <source>
        <tissue>Heart</tissue>
        <tissue>Kidney</tissue>
        <tissue>Lung</tissue>
        <tissue>Spleen</tissue>
    </source>
</reference>
<proteinExistence type="evidence at protein level"/>
<comment type="function">
    <text>Inhibits signal transduction by increasing the GTPase activity of G protein alpha subunits thereby driving them into their inactive GDP-bound form. Binds to G(i) alpha-1, G(i) alpha-2, G(i) alpha-3 and G(q) alpha.</text>
</comment>
<comment type="subcellular location">
    <subcellularLocation>
        <location>Cytoplasm</location>
    </subcellularLocation>
</comment>
<comment type="tissue specificity">
    <text>Expressed in bone marrow, spleen, fetal liver and lung. At very low levels expressed in heart.</text>
</comment>
<name>RGS18_MOUSE</name>
<gene>
    <name type="primary">Rgs18</name>
</gene>
<accession>Q99PG4</accession>
<feature type="chain" id="PRO_0000204228" description="Regulator of G-protein signaling 18">
    <location>
        <begin position="1"/>
        <end position="235"/>
    </location>
</feature>
<feature type="domain" description="RGS" evidence="2">
    <location>
        <begin position="86"/>
        <end position="202"/>
    </location>
</feature>
<feature type="modified residue" description="Phosphoserine" evidence="1">
    <location>
        <position position="49"/>
    </location>
</feature>
<feature type="modified residue" description="Phosphoserine" evidence="3">
    <location>
        <position position="216"/>
    </location>
</feature>
<feature type="modified residue" description="Phosphoserine" evidence="3">
    <location>
        <position position="218"/>
    </location>
</feature>
<sequence length="235" mass="27610">MDMSLVFFSQLNMCESKEKTFFKLMHGSGKEETSIEAKIRAKEKRNRLSLLLQRPDFHGETQASRSALLAKETRVSPEEAVKWAESFDKLLSHRDGVDAFTRFLKTEFSEENIEFWVACEDFKKCKEPQQIILKAKAIYEKFIQNDAPKEVNIDFHTKEVIAKSIAQPTLHSFDTAQSRVYQLMEHDSYKRFLKSETYLHLIEGRPQRPTNLRRRSRSFTYNDFQDVKSDVAIWL</sequence>